<evidence type="ECO:0000255" key="1">
    <source>
        <dbReference type="HAMAP-Rule" id="MF_00283"/>
    </source>
</evidence>
<evidence type="ECO:0007829" key="2">
    <source>
        <dbReference type="PDB" id="2RHQ"/>
    </source>
</evidence>
<evidence type="ECO:0007829" key="3">
    <source>
        <dbReference type="PDB" id="2RHS"/>
    </source>
</evidence>
<sequence length="800" mass="88876">MLISNEWLKDYVDAGVKVEDLAERITRTGIEVDDMIDYSKDIKNLVVGYIQSKEKHPDADKLNICQVDIGEEEPVQIVCGAPNVDAGQHVIVAKVGGRLPGGIKIKRAKLRGERSEGMICSLQEIGISSNVVPKAYENGIFVFQTEVEPGTDALTALYLNDQVMEFDLTPNRADALSMVGTAYEVAALYQTEMTKPETQSNETSESATNELSVTIDNPEKVPYYSARVVKNVSIEPSPIWVQARLIKAGIRPINNVVDISNYVLLEYGQPLHMFDQDHIGSKEIVVRQAKDEETMTTLDNNERKLVDTDIVISNGQEPIALAGVMGGDFSEVTEQTTNVVIEGAIFDPVSIRHTSRRLNLRSEASSRFEKGIATEFVDEAVDRACYLLQELASGEVLQDRVSSGDLGSFVTPIDITAEKVNKTIGFNLSNDEIQSIFRQLGFETTLKGETLTVNVPSRRKDITIKEDLIEEVARIYGYDEIPSSLPVFGEVTSGELTDRQHKTRTLKETLEGAGLNQAITYSLVSKDHAKDFALQERPTISLLMPMSEAHATLRQSLLPHLIEATAYNVARKNKDVRLYEIGRVFFGNGEGELPDEVEYLSGILTGEYVVNAWQGKKEEIDFFIAKGVVDRVAEKLNLEFSYKAGKIEGLHPGRTAIVSLEGQDIGFIGELHPQVAADNDLKRTYVFELNYDAMMQVAVGYINYEQIPKFPGVTRDIALEVNHDVPSSELKQIIHNNGEDILQSTLVFDVYEGEHLEKGKKSVAIRLNYLDTEDTLTDERVSKIHDKILEALQAQGATIR</sequence>
<feature type="chain" id="PRO_0000232090" description="Phenylalanine--tRNA ligase beta subunit">
    <location>
        <begin position="1"/>
        <end position="800"/>
    </location>
</feature>
<feature type="domain" description="tRNA-binding" evidence="1">
    <location>
        <begin position="39"/>
        <end position="154"/>
    </location>
</feature>
<feature type="domain" description="B5" evidence="1">
    <location>
        <begin position="408"/>
        <end position="483"/>
    </location>
</feature>
<feature type="domain" description="FDX-ACB" evidence="1">
    <location>
        <begin position="708"/>
        <end position="800"/>
    </location>
</feature>
<feature type="binding site" evidence="1">
    <location>
        <position position="461"/>
    </location>
    <ligand>
        <name>Mg(2+)</name>
        <dbReference type="ChEBI" id="CHEBI:18420"/>
        <note>shared with alpha subunit</note>
    </ligand>
</feature>
<feature type="binding site" evidence="1">
    <location>
        <position position="467"/>
    </location>
    <ligand>
        <name>Mg(2+)</name>
        <dbReference type="ChEBI" id="CHEBI:18420"/>
        <note>shared with alpha subunit</note>
    </ligand>
</feature>
<feature type="binding site" evidence="1">
    <location>
        <position position="470"/>
    </location>
    <ligand>
        <name>Mg(2+)</name>
        <dbReference type="ChEBI" id="CHEBI:18420"/>
        <note>shared with alpha subunit</note>
    </ligand>
</feature>
<feature type="binding site" evidence="1">
    <location>
        <position position="471"/>
    </location>
    <ligand>
        <name>Mg(2+)</name>
        <dbReference type="ChEBI" id="CHEBI:18420"/>
        <note>shared with alpha subunit</note>
    </ligand>
</feature>
<feature type="strand" evidence="2">
    <location>
        <begin position="2"/>
        <end position="4"/>
    </location>
</feature>
<feature type="helix" evidence="2">
    <location>
        <begin position="5"/>
        <end position="8"/>
    </location>
</feature>
<feature type="turn" evidence="2">
    <location>
        <begin position="9"/>
        <end position="11"/>
    </location>
</feature>
<feature type="helix" evidence="2">
    <location>
        <begin position="18"/>
        <end position="27"/>
    </location>
</feature>
<feature type="strand" evidence="2">
    <location>
        <begin position="31"/>
        <end position="37"/>
    </location>
</feature>
<feature type="turn" evidence="2">
    <location>
        <begin position="38"/>
        <end position="41"/>
    </location>
</feature>
<feature type="strand" evidence="2">
    <location>
        <begin position="43"/>
        <end position="54"/>
    </location>
</feature>
<feature type="strand" evidence="2">
    <location>
        <begin position="58"/>
        <end position="60"/>
    </location>
</feature>
<feature type="strand" evidence="2">
    <location>
        <begin position="64"/>
        <end position="68"/>
    </location>
</feature>
<feature type="strand" evidence="2">
    <location>
        <begin position="70"/>
        <end position="73"/>
    </location>
</feature>
<feature type="strand" evidence="2">
    <location>
        <begin position="75"/>
        <end position="78"/>
    </location>
</feature>
<feature type="strand" evidence="2">
    <location>
        <begin position="89"/>
        <end position="99"/>
    </location>
</feature>
<feature type="turn" evidence="2">
    <location>
        <begin position="100"/>
        <end position="102"/>
    </location>
</feature>
<feature type="strand" evidence="2">
    <location>
        <begin position="108"/>
        <end position="110"/>
    </location>
</feature>
<feature type="strand" evidence="2">
    <location>
        <begin position="113"/>
        <end position="115"/>
    </location>
</feature>
<feature type="strand" evidence="2">
    <location>
        <begin position="117"/>
        <end position="119"/>
    </location>
</feature>
<feature type="helix" evidence="2">
    <location>
        <begin position="123"/>
        <end position="125"/>
    </location>
</feature>
<feature type="helix" evidence="2">
    <location>
        <begin position="129"/>
        <end position="131"/>
    </location>
</feature>
<feature type="helix" evidence="2">
    <location>
        <begin position="134"/>
        <end position="137"/>
    </location>
</feature>
<feature type="helix" evidence="2">
    <location>
        <begin position="153"/>
        <end position="156"/>
    </location>
</feature>
<feature type="strand" evidence="2">
    <location>
        <begin position="162"/>
        <end position="167"/>
    </location>
</feature>
<feature type="helix" evidence="2">
    <location>
        <begin position="170"/>
        <end position="175"/>
    </location>
</feature>
<feature type="helix" evidence="2">
    <location>
        <begin position="178"/>
        <end position="189"/>
    </location>
</feature>
<feature type="strand" evidence="3">
    <location>
        <begin position="204"/>
        <end position="206"/>
    </location>
</feature>
<feature type="helix" evidence="2">
    <location>
        <begin position="207"/>
        <end position="209"/>
    </location>
</feature>
<feature type="strand" evidence="2">
    <location>
        <begin position="212"/>
        <end position="216"/>
    </location>
</feature>
<feature type="turn" evidence="2">
    <location>
        <begin position="218"/>
        <end position="220"/>
    </location>
</feature>
<feature type="strand" evidence="2">
    <location>
        <begin position="222"/>
        <end position="230"/>
    </location>
</feature>
<feature type="helix" evidence="2">
    <location>
        <begin position="239"/>
        <end position="247"/>
    </location>
</feature>
<feature type="helix" evidence="2">
    <location>
        <begin position="255"/>
        <end position="267"/>
    </location>
</feature>
<feature type="strand" evidence="2">
    <location>
        <begin position="272"/>
        <end position="275"/>
    </location>
</feature>
<feature type="helix" evidence="2">
    <location>
        <begin position="276"/>
        <end position="278"/>
    </location>
</feature>
<feature type="strand" evidence="2">
    <location>
        <begin position="279"/>
        <end position="288"/>
    </location>
</feature>
<feature type="strand" evidence="2">
    <location>
        <begin position="294"/>
        <end position="297"/>
    </location>
</feature>
<feature type="strand" evidence="2">
    <location>
        <begin position="302"/>
        <end position="304"/>
    </location>
</feature>
<feature type="strand" evidence="2">
    <location>
        <begin position="310"/>
        <end position="321"/>
    </location>
</feature>
<feature type="turn" evidence="2">
    <location>
        <begin position="322"/>
        <end position="324"/>
    </location>
</feature>
<feature type="strand" evidence="2">
    <location>
        <begin position="325"/>
        <end position="331"/>
    </location>
</feature>
<feature type="strand" evidence="2">
    <location>
        <begin position="338"/>
        <end position="345"/>
    </location>
</feature>
<feature type="helix" evidence="2">
    <location>
        <begin position="348"/>
        <end position="357"/>
    </location>
</feature>
<feature type="helix" evidence="2">
    <location>
        <begin position="363"/>
        <end position="369"/>
    </location>
</feature>
<feature type="helix" evidence="2">
    <location>
        <begin position="374"/>
        <end position="376"/>
    </location>
</feature>
<feature type="helix" evidence="2">
    <location>
        <begin position="377"/>
        <end position="391"/>
    </location>
</feature>
<feature type="strand" evidence="2">
    <location>
        <begin position="401"/>
        <end position="404"/>
    </location>
</feature>
<feature type="strand" evidence="2">
    <location>
        <begin position="409"/>
        <end position="416"/>
    </location>
</feature>
<feature type="helix" evidence="2">
    <location>
        <begin position="417"/>
        <end position="424"/>
    </location>
</feature>
<feature type="helix" evidence="2">
    <location>
        <begin position="430"/>
        <end position="439"/>
    </location>
</feature>
<feature type="strand" evidence="2">
    <location>
        <begin position="443"/>
        <end position="447"/>
    </location>
</feature>
<feature type="strand" evidence="2">
    <location>
        <begin position="450"/>
        <end position="456"/>
    </location>
</feature>
<feature type="helix" evidence="2">
    <location>
        <begin position="465"/>
        <end position="476"/>
    </location>
</feature>
<feature type="turn" evidence="2">
    <location>
        <begin position="478"/>
        <end position="480"/>
    </location>
</feature>
<feature type="helix" evidence="2">
    <location>
        <begin position="498"/>
        <end position="512"/>
    </location>
</feature>
<feature type="strand" evidence="2">
    <location>
        <begin position="522"/>
        <end position="524"/>
    </location>
</feature>
<feature type="turn" evidence="2">
    <location>
        <begin position="526"/>
        <end position="532"/>
    </location>
</feature>
<feature type="strand" evidence="2">
    <location>
        <begin position="550"/>
        <end position="553"/>
    </location>
</feature>
<feature type="helix" evidence="2">
    <location>
        <begin position="558"/>
        <end position="570"/>
    </location>
</feature>
<feature type="strand" evidence="2">
    <location>
        <begin position="576"/>
        <end position="586"/>
    </location>
</feature>
<feature type="strand" evidence="2">
    <location>
        <begin position="595"/>
        <end position="611"/>
    </location>
</feature>
<feature type="helix" evidence="2">
    <location>
        <begin position="612"/>
        <end position="614"/>
    </location>
</feature>
<feature type="strand" evidence="2">
    <location>
        <begin position="616"/>
        <end position="619"/>
    </location>
</feature>
<feature type="helix" evidence="2">
    <location>
        <begin position="622"/>
        <end position="636"/>
    </location>
</feature>
<feature type="strand" evidence="2">
    <location>
        <begin position="641"/>
        <end position="644"/>
    </location>
</feature>
<feature type="strand" evidence="2">
    <location>
        <begin position="650"/>
        <end position="660"/>
    </location>
</feature>
<feature type="strand" evidence="2">
    <location>
        <begin position="663"/>
        <end position="671"/>
    </location>
</feature>
<feature type="helix" evidence="2">
    <location>
        <begin position="673"/>
        <end position="678"/>
    </location>
</feature>
<feature type="strand" evidence="2">
    <location>
        <begin position="683"/>
        <end position="690"/>
    </location>
</feature>
<feature type="helix" evidence="2">
    <location>
        <begin position="691"/>
        <end position="694"/>
    </location>
</feature>
<feature type="strand" evidence="2">
    <location>
        <begin position="713"/>
        <end position="718"/>
    </location>
</feature>
<feature type="strand" evidence="2">
    <location>
        <begin position="720"/>
        <end position="722"/>
    </location>
</feature>
<feature type="helix" evidence="2">
    <location>
        <begin position="727"/>
        <end position="737"/>
    </location>
</feature>
<feature type="helix" evidence="2">
    <location>
        <begin position="739"/>
        <end position="741"/>
    </location>
</feature>
<feature type="strand" evidence="2">
    <location>
        <begin position="742"/>
        <end position="751"/>
    </location>
</feature>
<feature type="strand" evidence="2">
    <location>
        <begin position="760"/>
        <end position="769"/>
    </location>
</feature>
<feature type="strand" evidence="2">
    <location>
        <begin position="772"/>
        <end position="774"/>
    </location>
</feature>
<feature type="helix" evidence="2">
    <location>
        <begin position="778"/>
        <end position="794"/>
    </location>
</feature>
<accession>Q4L5E4</accession>
<proteinExistence type="evidence at protein level"/>
<keyword id="KW-0002">3D-structure</keyword>
<keyword id="KW-0030">Aminoacyl-tRNA synthetase</keyword>
<keyword id="KW-0067">ATP-binding</keyword>
<keyword id="KW-0963">Cytoplasm</keyword>
<keyword id="KW-0436">Ligase</keyword>
<keyword id="KW-0460">Magnesium</keyword>
<keyword id="KW-0479">Metal-binding</keyword>
<keyword id="KW-0547">Nucleotide-binding</keyword>
<keyword id="KW-0648">Protein biosynthesis</keyword>
<keyword id="KW-0694">RNA-binding</keyword>
<keyword id="KW-0820">tRNA-binding</keyword>
<gene>
    <name evidence="1" type="primary">pheT</name>
    <name type="ordered locus">SH1822</name>
</gene>
<comment type="catalytic activity">
    <reaction evidence="1">
        <text>tRNA(Phe) + L-phenylalanine + ATP = L-phenylalanyl-tRNA(Phe) + AMP + diphosphate + H(+)</text>
        <dbReference type="Rhea" id="RHEA:19413"/>
        <dbReference type="Rhea" id="RHEA-COMP:9668"/>
        <dbReference type="Rhea" id="RHEA-COMP:9699"/>
        <dbReference type="ChEBI" id="CHEBI:15378"/>
        <dbReference type="ChEBI" id="CHEBI:30616"/>
        <dbReference type="ChEBI" id="CHEBI:33019"/>
        <dbReference type="ChEBI" id="CHEBI:58095"/>
        <dbReference type="ChEBI" id="CHEBI:78442"/>
        <dbReference type="ChEBI" id="CHEBI:78531"/>
        <dbReference type="ChEBI" id="CHEBI:456215"/>
        <dbReference type="EC" id="6.1.1.20"/>
    </reaction>
</comment>
<comment type="cofactor">
    <cofactor evidence="1">
        <name>Mg(2+)</name>
        <dbReference type="ChEBI" id="CHEBI:18420"/>
    </cofactor>
    <text evidence="1">Binds 2 magnesium ions per tetramer.</text>
</comment>
<comment type="subunit">
    <text evidence="1">Tetramer of two alpha and two beta subunits.</text>
</comment>
<comment type="subcellular location">
    <subcellularLocation>
        <location>Cytoplasm</location>
    </subcellularLocation>
</comment>
<comment type="similarity">
    <text evidence="1">Belongs to the phenylalanyl-tRNA synthetase beta subunit family. Type 1 subfamily.</text>
</comment>
<reference key="1">
    <citation type="journal article" date="2005" name="J. Bacteriol.">
        <title>Whole-genome sequencing of Staphylococcus haemolyticus uncovers the extreme plasticity of its genome and the evolution of human-colonizing staphylococcal species.</title>
        <authorList>
            <person name="Takeuchi F."/>
            <person name="Watanabe S."/>
            <person name="Baba T."/>
            <person name="Yuzawa H."/>
            <person name="Ito T."/>
            <person name="Morimoto Y."/>
            <person name="Kuroda M."/>
            <person name="Cui L."/>
            <person name="Takahashi M."/>
            <person name="Ankai A."/>
            <person name="Baba S."/>
            <person name="Fukui S."/>
            <person name="Lee J.C."/>
            <person name="Hiramatsu K."/>
        </authorList>
    </citation>
    <scope>NUCLEOTIDE SEQUENCE [LARGE SCALE GENOMIC DNA]</scope>
    <source>
        <strain>JCSC1435</strain>
    </source>
</reference>
<name>SYFB_STAHJ</name>
<organism>
    <name type="scientific">Staphylococcus haemolyticus (strain JCSC1435)</name>
    <dbReference type="NCBI Taxonomy" id="279808"/>
    <lineage>
        <taxon>Bacteria</taxon>
        <taxon>Bacillati</taxon>
        <taxon>Bacillota</taxon>
        <taxon>Bacilli</taxon>
        <taxon>Bacillales</taxon>
        <taxon>Staphylococcaceae</taxon>
        <taxon>Staphylococcus</taxon>
    </lineage>
</organism>
<dbReference type="EC" id="6.1.1.20" evidence="1"/>
<dbReference type="EMBL" id="AP006716">
    <property type="protein sequence ID" value="BAE05131.1"/>
    <property type="molecule type" value="Genomic_DNA"/>
</dbReference>
<dbReference type="RefSeq" id="WP_011276099.1">
    <property type="nucleotide sequence ID" value="NC_007168.1"/>
</dbReference>
<dbReference type="PDB" id="2RHQ">
    <property type="method" value="X-ray"/>
    <property type="resolution" value="2.20 A"/>
    <property type="chains" value="B=1-799"/>
</dbReference>
<dbReference type="PDB" id="2RHS">
    <property type="method" value="X-ray"/>
    <property type="resolution" value="2.20 A"/>
    <property type="chains" value="B/D=1-800"/>
</dbReference>
<dbReference type="PDBsum" id="2RHQ"/>
<dbReference type="PDBsum" id="2RHS"/>
<dbReference type="SMR" id="Q4L5E4"/>
<dbReference type="DrugBank" id="DB07817">
    <property type="generic name" value="1-{3-[(4-pyridin-2-ylpiperazin-1-yl)sulfonyl]phenyl}-3-(1,3-thiazol-2-yl)urea"/>
</dbReference>
<dbReference type="KEGG" id="sha:SH1822"/>
<dbReference type="eggNOG" id="COG0072">
    <property type="taxonomic scope" value="Bacteria"/>
</dbReference>
<dbReference type="eggNOG" id="COG0073">
    <property type="taxonomic scope" value="Bacteria"/>
</dbReference>
<dbReference type="HOGENOM" id="CLU_016891_0_0_9"/>
<dbReference type="OrthoDB" id="9805455at2"/>
<dbReference type="EvolutionaryTrace" id="Q4L5E4"/>
<dbReference type="Proteomes" id="UP000000543">
    <property type="component" value="Chromosome"/>
</dbReference>
<dbReference type="GO" id="GO:0009328">
    <property type="term" value="C:phenylalanine-tRNA ligase complex"/>
    <property type="evidence" value="ECO:0007669"/>
    <property type="project" value="TreeGrafter"/>
</dbReference>
<dbReference type="GO" id="GO:0005524">
    <property type="term" value="F:ATP binding"/>
    <property type="evidence" value="ECO:0007669"/>
    <property type="project" value="UniProtKB-UniRule"/>
</dbReference>
<dbReference type="GO" id="GO:0140096">
    <property type="term" value="F:catalytic activity, acting on a protein"/>
    <property type="evidence" value="ECO:0007669"/>
    <property type="project" value="UniProtKB-ARBA"/>
</dbReference>
<dbReference type="GO" id="GO:0000287">
    <property type="term" value="F:magnesium ion binding"/>
    <property type="evidence" value="ECO:0007669"/>
    <property type="project" value="UniProtKB-UniRule"/>
</dbReference>
<dbReference type="GO" id="GO:0004826">
    <property type="term" value="F:phenylalanine-tRNA ligase activity"/>
    <property type="evidence" value="ECO:0007669"/>
    <property type="project" value="UniProtKB-UniRule"/>
</dbReference>
<dbReference type="GO" id="GO:0016740">
    <property type="term" value="F:transferase activity"/>
    <property type="evidence" value="ECO:0007669"/>
    <property type="project" value="UniProtKB-ARBA"/>
</dbReference>
<dbReference type="GO" id="GO:0000049">
    <property type="term" value="F:tRNA binding"/>
    <property type="evidence" value="ECO:0007669"/>
    <property type="project" value="UniProtKB-KW"/>
</dbReference>
<dbReference type="GO" id="GO:0006432">
    <property type="term" value="P:phenylalanyl-tRNA aminoacylation"/>
    <property type="evidence" value="ECO:0007669"/>
    <property type="project" value="UniProtKB-UniRule"/>
</dbReference>
<dbReference type="CDD" id="cd00769">
    <property type="entry name" value="PheRS_beta_core"/>
    <property type="match status" value="1"/>
</dbReference>
<dbReference type="CDD" id="cd02796">
    <property type="entry name" value="tRNA_bind_bactPheRS"/>
    <property type="match status" value="1"/>
</dbReference>
<dbReference type="FunFam" id="2.40.50.140:FF:000045">
    <property type="entry name" value="Phenylalanine--tRNA ligase beta subunit"/>
    <property type="match status" value="1"/>
</dbReference>
<dbReference type="FunFam" id="3.30.56.10:FF:000002">
    <property type="entry name" value="Phenylalanine--tRNA ligase beta subunit"/>
    <property type="match status" value="1"/>
</dbReference>
<dbReference type="FunFam" id="3.30.70.380:FF:000001">
    <property type="entry name" value="Phenylalanine--tRNA ligase beta subunit"/>
    <property type="match status" value="1"/>
</dbReference>
<dbReference type="FunFam" id="3.30.930.10:FF:000022">
    <property type="entry name" value="Phenylalanine--tRNA ligase beta subunit"/>
    <property type="match status" value="1"/>
</dbReference>
<dbReference type="FunFam" id="3.50.40.10:FF:000001">
    <property type="entry name" value="Phenylalanine--tRNA ligase beta subunit"/>
    <property type="match status" value="1"/>
</dbReference>
<dbReference type="Gene3D" id="3.30.56.10">
    <property type="match status" value="2"/>
</dbReference>
<dbReference type="Gene3D" id="3.30.930.10">
    <property type="entry name" value="Bira Bifunctional Protein, Domain 2"/>
    <property type="match status" value="1"/>
</dbReference>
<dbReference type="Gene3D" id="3.30.70.380">
    <property type="entry name" value="Ferrodoxin-fold anticodon-binding domain"/>
    <property type="match status" value="1"/>
</dbReference>
<dbReference type="Gene3D" id="2.40.50.140">
    <property type="entry name" value="Nucleic acid-binding proteins"/>
    <property type="match status" value="1"/>
</dbReference>
<dbReference type="Gene3D" id="3.50.40.10">
    <property type="entry name" value="Phenylalanyl-trna Synthetase, Chain B, domain 3"/>
    <property type="match status" value="1"/>
</dbReference>
<dbReference type="HAMAP" id="MF_00283">
    <property type="entry name" value="Phe_tRNA_synth_beta1"/>
    <property type="match status" value="1"/>
</dbReference>
<dbReference type="InterPro" id="IPR045864">
    <property type="entry name" value="aa-tRNA-synth_II/BPL/LPL"/>
</dbReference>
<dbReference type="InterPro" id="IPR005146">
    <property type="entry name" value="B3/B4_tRNA-bd"/>
</dbReference>
<dbReference type="InterPro" id="IPR009061">
    <property type="entry name" value="DNA-bd_dom_put_sf"/>
</dbReference>
<dbReference type="InterPro" id="IPR005121">
    <property type="entry name" value="Fdx_antiC-bd"/>
</dbReference>
<dbReference type="InterPro" id="IPR036690">
    <property type="entry name" value="Fdx_antiC-bd_sf"/>
</dbReference>
<dbReference type="InterPro" id="IPR012340">
    <property type="entry name" value="NA-bd_OB-fold"/>
</dbReference>
<dbReference type="InterPro" id="IPR045060">
    <property type="entry name" value="Phe-tRNA-ligase_IIc_bsu"/>
</dbReference>
<dbReference type="InterPro" id="IPR004532">
    <property type="entry name" value="Phe-tRNA-ligase_IIc_bsu_bact"/>
</dbReference>
<dbReference type="InterPro" id="IPR020825">
    <property type="entry name" value="Phe-tRNA_synthase-like_B3/B4"/>
</dbReference>
<dbReference type="InterPro" id="IPR041616">
    <property type="entry name" value="PheRS_beta_core"/>
</dbReference>
<dbReference type="InterPro" id="IPR002547">
    <property type="entry name" value="tRNA-bd_dom"/>
</dbReference>
<dbReference type="InterPro" id="IPR033714">
    <property type="entry name" value="tRNA_bind_bactPheRS"/>
</dbReference>
<dbReference type="InterPro" id="IPR005147">
    <property type="entry name" value="tRNA_synthase_B5-dom"/>
</dbReference>
<dbReference type="NCBIfam" id="TIGR00472">
    <property type="entry name" value="pheT_bact"/>
    <property type="match status" value="1"/>
</dbReference>
<dbReference type="NCBIfam" id="NF045760">
    <property type="entry name" value="YtpR"/>
    <property type="match status" value="1"/>
</dbReference>
<dbReference type="PANTHER" id="PTHR10947:SF0">
    <property type="entry name" value="PHENYLALANINE--TRNA LIGASE BETA SUBUNIT"/>
    <property type="match status" value="1"/>
</dbReference>
<dbReference type="PANTHER" id="PTHR10947">
    <property type="entry name" value="PHENYLALANYL-TRNA SYNTHETASE BETA CHAIN AND LEUCINE-RICH REPEAT-CONTAINING PROTEIN 47"/>
    <property type="match status" value="1"/>
</dbReference>
<dbReference type="Pfam" id="PF03483">
    <property type="entry name" value="B3_4"/>
    <property type="match status" value="1"/>
</dbReference>
<dbReference type="Pfam" id="PF03484">
    <property type="entry name" value="B5"/>
    <property type="match status" value="1"/>
</dbReference>
<dbReference type="Pfam" id="PF03147">
    <property type="entry name" value="FDX-ACB"/>
    <property type="match status" value="1"/>
</dbReference>
<dbReference type="Pfam" id="PF01588">
    <property type="entry name" value="tRNA_bind"/>
    <property type="match status" value="1"/>
</dbReference>
<dbReference type="Pfam" id="PF17759">
    <property type="entry name" value="tRNA_synthFbeta"/>
    <property type="match status" value="1"/>
</dbReference>
<dbReference type="SMART" id="SM00873">
    <property type="entry name" value="B3_4"/>
    <property type="match status" value="1"/>
</dbReference>
<dbReference type="SMART" id="SM00874">
    <property type="entry name" value="B5"/>
    <property type="match status" value="1"/>
</dbReference>
<dbReference type="SMART" id="SM00896">
    <property type="entry name" value="FDX-ACB"/>
    <property type="match status" value="1"/>
</dbReference>
<dbReference type="SUPFAM" id="SSF54991">
    <property type="entry name" value="Anticodon-binding domain of PheRS"/>
    <property type="match status" value="1"/>
</dbReference>
<dbReference type="SUPFAM" id="SSF55681">
    <property type="entry name" value="Class II aaRS and biotin synthetases"/>
    <property type="match status" value="1"/>
</dbReference>
<dbReference type="SUPFAM" id="SSF50249">
    <property type="entry name" value="Nucleic acid-binding proteins"/>
    <property type="match status" value="1"/>
</dbReference>
<dbReference type="SUPFAM" id="SSF56037">
    <property type="entry name" value="PheT/TilS domain"/>
    <property type="match status" value="1"/>
</dbReference>
<dbReference type="SUPFAM" id="SSF46955">
    <property type="entry name" value="Putative DNA-binding domain"/>
    <property type="match status" value="1"/>
</dbReference>
<dbReference type="PROSITE" id="PS51483">
    <property type="entry name" value="B5"/>
    <property type="match status" value="1"/>
</dbReference>
<dbReference type="PROSITE" id="PS51447">
    <property type="entry name" value="FDX_ACB"/>
    <property type="match status" value="1"/>
</dbReference>
<dbReference type="PROSITE" id="PS50886">
    <property type="entry name" value="TRBD"/>
    <property type="match status" value="1"/>
</dbReference>
<protein>
    <recommendedName>
        <fullName evidence="1">Phenylalanine--tRNA ligase beta subunit</fullName>
        <ecNumber evidence="1">6.1.1.20</ecNumber>
    </recommendedName>
    <alternativeName>
        <fullName evidence="1">Phenylalanyl-tRNA synthetase beta subunit</fullName>
        <shortName evidence="1">PheRS</shortName>
    </alternativeName>
</protein>